<comment type="subcellular location">
    <subcellularLocation>
        <location evidence="1">Cell inner membrane</location>
        <topology evidence="1">Multi-pass membrane protein</topology>
    </subcellularLocation>
</comment>
<comment type="similarity">
    <text evidence="1">Belongs to the UPF0060 family.</text>
</comment>
<evidence type="ECO:0000255" key="1">
    <source>
        <dbReference type="HAMAP-Rule" id="MF_00010"/>
    </source>
</evidence>
<gene>
    <name type="ordered locus">PA14_21660</name>
</gene>
<sequence length="109" mass="12106">MINYLWFVLAAFCEIAGCYAFYLWLRLGKSALWVLPGLLSLTLFALLLTRVEASYAGRAYAAYGGIYVAASLFWLAFVERSRPLWSDWLGVALCVVGASVVLFGPRLSQ</sequence>
<accession>Q02QA7</accession>
<name>Y2166_PSEAB</name>
<protein>
    <recommendedName>
        <fullName evidence="1">UPF0060 membrane protein PA14_21660</fullName>
    </recommendedName>
</protein>
<organism>
    <name type="scientific">Pseudomonas aeruginosa (strain UCBPP-PA14)</name>
    <dbReference type="NCBI Taxonomy" id="208963"/>
    <lineage>
        <taxon>Bacteria</taxon>
        <taxon>Pseudomonadati</taxon>
        <taxon>Pseudomonadota</taxon>
        <taxon>Gammaproteobacteria</taxon>
        <taxon>Pseudomonadales</taxon>
        <taxon>Pseudomonadaceae</taxon>
        <taxon>Pseudomonas</taxon>
    </lineage>
</organism>
<keyword id="KW-0997">Cell inner membrane</keyword>
<keyword id="KW-1003">Cell membrane</keyword>
<keyword id="KW-0472">Membrane</keyword>
<keyword id="KW-0812">Transmembrane</keyword>
<keyword id="KW-1133">Transmembrane helix</keyword>
<dbReference type="EMBL" id="CP000438">
    <property type="protein sequence ID" value="ABJ12525.1"/>
    <property type="molecule type" value="Genomic_DNA"/>
</dbReference>
<dbReference type="RefSeq" id="WP_003091616.1">
    <property type="nucleotide sequence ID" value="NZ_CP034244.1"/>
</dbReference>
<dbReference type="SMR" id="Q02QA7"/>
<dbReference type="KEGG" id="pau:PA14_21660"/>
<dbReference type="PseudoCAP" id="PA14_21660"/>
<dbReference type="HOGENOM" id="CLU_117653_1_0_6"/>
<dbReference type="BioCyc" id="PAER208963:G1G74-1795-MONOMER"/>
<dbReference type="Proteomes" id="UP000000653">
    <property type="component" value="Chromosome"/>
</dbReference>
<dbReference type="GO" id="GO:0005886">
    <property type="term" value="C:plasma membrane"/>
    <property type="evidence" value="ECO:0007669"/>
    <property type="project" value="UniProtKB-SubCell"/>
</dbReference>
<dbReference type="HAMAP" id="MF_00010">
    <property type="entry name" value="UPF0060"/>
    <property type="match status" value="1"/>
</dbReference>
<dbReference type="InterPro" id="IPR003844">
    <property type="entry name" value="UPF0060"/>
</dbReference>
<dbReference type="NCBIfam" id="NF002586">
    <property type="entry name" value="PRK02237.1"/>
    <property type="match status" value="1"/>
</dbReference>
<dbReference type="PANTHER" id="PTHR36116">
    <property type="entry name" value="UPF0060 MEMBRANE PROTEIN YNFA"/>
    <property type="match status" value="1"/>
</dbReference>
<dbReference type="PANTHER" id="PTHR36116:SF1">
    <property type="entry name" value="UPF0060 MEMBRANE PROTEIN YNFA"/>
    <property type="match status" value="1"/>
</dbReference>
<dbReference type="Pfam" id="PF02694">
    <property type="entry name" value="UPF0060"/>
    <property type="match status" value="1"/>
</dbReference>
<dbReference type="SUPFAM" id="SSF103481">
    <property type="entry name" value="Multidrug resistance efflux transporter EmrE"/>
    <property type="match status" value="1"/>
</dbReference>
<reference key="1">
    <citation type="journal article" date="2006" name="Genome Biol.">
        <title>Genomic analysis reveals that Pseudomonas aeruginosa virulence is combinatorial.</title>
        <authorList>
            <person name="Lee D.G."/>
            <person name="Urbach J.M."/>
            <person name="Wu G."/>
            <person name="Liberati N.T."/>
            <person name="Feinbaum R.L."/>
            <person name="Miyata S."/>
            <person name="Diggins L.T."/>
            <person name="He J."/>
            <person name="Saucier M."/>
            <person name="Deziel E."/>
            <person name="Friedman L."/>
            <person name="Li L."/>
            <person name="Grills G."/>
            <person name="Montgomery K."/>
            <person name="Kucherlapati R."/>
            <person name="Rahme L.G."/>
            <person name="Ausubel F.M."/>
        </authorList>
    </citation>
    <scope>NUCLEOTIDE SEQUENCE [LARGE SCALE GENOMIC DNA]</scope>
    <source>
        <strain>UCBPP-PA14</strain>
    </source>
</reference>
<feature type="chain" id="PRO_0000282245" description="UPF0060 membrane protein PA14_21660">
    <location>
        <begin position="1"/>
        <end position="109"/>
    </location>
</feature>
<feature type="transmembrane region" description="Helical" evidence="1">
    <location>
        <begin position="5"/>
        <end position="25"/>
    </location>
</feature>
<feature type="transmembrane region" description="Helical" evidence="1">
    <location>
        <begin position="27"/>
        <end position="47"/>
    </location>
</feature>
<feature type="transmembrane region" description="Helical" evidence="1">
    <location>
        <begin position="59"/>
        <end position="79"/>
    </location>
</feature>
<feature type="transmembrane region" description="Helical" evidence="1">
    <location>
        <begin position="84"/>
        <end position="104"/>
    </location>
</feature>
<proteinExistence type="inferred from homology"/>